<keyword id="KW-0046">Antibiotic resistance</keyword>
<keyword id="KW-1003">Cell membrane</keyword>
<keyword id="KW-0133">Cell shape</keyword>
<keyword id="KW-0961">Cell wall biogenesis/degradation</keyword>
<keyword id="KW-0378">Hydrolase</keyword>
<keyword id="KW-0472">Membrane</keyword>
<keyword id="KW-0573">Peptidoglycan synthesis</keyword>
<keyword id="KW-1185">Reference proteome</keyword>
<keyword id="KW-0812">Transmembrane</keyword>
<keyword id="KW-1133">Transmembrane helix</keyword>
<gene>
    <name evidence="1" type="primary">uppP</name>
    <name type="synonym">bacA</name>
    <name type="synonym">upk</name>
    <name type="ordered locus">BU062</name>
</gene>
<organism>
    <name type="scientific">Buchnera aphidicola subsp. Acyrthosiphon pisum (strain APS)</name>
    <name type="common">Acyrthosiphon pisum symbiotic bacterium</name>
    <dbReference type="NCBI Taxonomy" id="107806"/>
    <lineage>
        <taxon>Bacteria</taxon>
        <taxon>Pseudomonadati</taxon>
        <taxon>Pseudomonadota</taxon>
        <taxon>Gammaproteobacteria</taxon>
        <taxon>Enterobacterales</taxon>
        <taxon>Erwiniaceae</taxon>
        <taxon>Buchnera</taxon>
    </lineage>
</organism>
<sequence>MLDLHQVIVSIIIGVIEGITEFLPISSTGHMIIASHWLKIDNENTKILEIFIEFGSALSILYFFHKKILRILKFNINVKKTNTKNLHILLAILPTIFFGLLFYKKIKLLFNTYNVMYALILGGIFLLISEIFKPKKYKTCSINDISLLQSAIIGFFQIFCLYPGFSRSGATIGTAILLGIKRSVAIEFSFIISIPLIMGASFYDFINNMHNFKILDLPIFFIGFMISFIVSILCIKKLLKIINRTSLIFFGIYRFIISGLIYFIN</sequence>
<dbReference type="EC" id="3.6.1.27" evidence="1"/>
<dbReference type="EMBL" id="BA000003">
    <property type="protein sequence ID" value="BAB12785.1"/>
    <property type="molecule type" value="Genomic_DNA"/>
</dbReference>
<dbReference type="RefSeq" id="NP_239899.1">
    <property type="nucleotide sequence ID" value="NC_002528.1"/>
</dbReference>
<dbReference type="RefSeq" id="WP_009874019.1">
    <property type="nucleotide sequence ID" value="NC_002528.1"/>
</dbReference>
<dbReference type="SMR" id="P57170"/>
<dbReference type="STRING" id="563178.BUAP5A_061"/>
<dbReference type="EnsemblBacteria" id="BAB12785">
    <property type="protein sequence ID" value="BAB12785"/>
    <property type="gene ID" value="BAB12785"/>
</dbReference>
<dbReference type="KEGG" id="buc:BU062"/>
<dbReference type="PATRIC" id="fig|107806.10.peg.71"/>
<dbReference type="eggNOG" id="COG1968">
    <property type="taxonomic scope" value="Bacteria"/>
</dbReference>
<dbReference type="HOGENOM" id="CLU_060296_2_0_6"/>
<dbReference type="Proteomes" id="UP000001806">
    <property type="component" value="Chromosome"/>
</dbReference>
<dbReference type="GO" id="GO:0005886">
    <property type="term" value="C:plasma membrane"/>
    <property type="evidence" value="ECO:0007669"/>
    <property type="project" value="UniProtKB-SubCell"/>
</dbReference>
<dbReference type="GO" id="GO:0050380">
    <property type="term" value="F:undecaprenyl-diphosphatase activity"/>
    <property type="evidence" value="ECO:0007669"/>
    <property type="project" value="UniProtKB-UniRule"/>
</dbReference>
<dbReference type="GO" id="GO:0071555">
    <property type="term" value="P:cell wall organization"/>
    <property type="evidence" value="ECO:0007669"/>
    <property type="project" value="UniProtKB-KW"/>
</dbReference>
<dbReference type="GO" id="GO:0009252">
    <property type="term" value="P:peptidoglycan biosynthetic process"/>
    <property type="evidence" value="ECO:0007669"/>
    <property type="project" value="UniProtKB-KW"/>
</dbReference>
<dbReference type="GO" id="GO:0008360">
    <property type="term" value="P:regulation of cell shape"/>
    <property type="evidence" value="ECO:0007669"/>
    <property type="project" value="UniProtKB-KW"/>
</dbReference>
<dbReference type="GO" id="GO:0046677">
    <property type="term" value="P:response to antibiotic"/>
    <property type="evidence" value="ECO:0007669"/>
    <property type="project" value="UniProtKB-UniRule"/>
</dbReference>
<dbReference type="HAMAP" id="MF_01006">
    <property type="entry name" value="Undec_diphosphatase"/>
    <property type="match status" value="1"/>
</dbReference>
<dbReference type="InterPro" id="IPR003824">
    <property type="entry name" value="UppP"/>
</dbReference>
<dbReference type="NCBIfam" id="NF001390">
    <property type="entry name" value="PRK00281.1-4"/>
    <property type="match status" value="1"/>
</dbReference>
<dbReference type="NCBIfam" id="TIGR00753">
    <property type="entry name" value="undec_PP_bacA"/>
    <property type="match status" value="1"/>
</dbReference>
<dbReference type="PANTHER" id="PTHR30622">
    <property type="entry name" value="UNDECAPRENYL-DIPHOSPHATASE"/>
    <property type="match status" value="1"/>
</dbReference>
<dbReference type="PANTHER" id="PTHR30622:SF3">
    <property type="entry name" value="UNDECAPRENYL-DIPHOSPHATASE"/>
    <property type="match status" value="1"/>
</dbReference>
<dbReference type="Pfam" id="PF02673">
    <property type="entry name" value="BacA"/>
    <property type="match status" value="1"/>
</dbReference>
<evidence type="ECO:0000255" key="1">
    <source>
        <dbReference type="HAMAP-Rule" id="MF_01006"/>
    </source>
</evidence>
<accession>P57170</accession>
<feature type="chain" id="PRO_0000151122" description="Undecaprenyl-diphosphatase">
    <location>
        <begin position="1"/>
        <end position="265"/>
    </location>
</feature>
<feature type="transmembrane region" description="Helical" evidence="1">
    <location>
        <begin position="7"/>
        <end position="27"/>
    </location>
</feature>
<feature type="transmembrane region" description="Helical" evidence="1">
    <location>
        <begin position="45"/>
        <end position="65"/>
    </location>
</feature>
<feature type="transmembrane region" description="Helical" evidence="1">
    <location>
        <begin position="86"/>
        <end position="106"/>
    </location>
</feature>
<feature type="transmembrane region" description="Helical" evidence="1">
    <location>
        <begin position="108"/>
        <end position="128"/>
    </location>
</feature>
<feature type="transmembrane region" description="Helical" evidence="1">
    <location>
        <begin position="145"/>
        <end position="165"/>
    </location>
</feature>
<feature type="transmembrane region" description="Helical" evidence="1">
    <location>
        <begin position="186"/>
        <end position="206"/>
    </location>
</feature>
<feature type="transmembrane region" description="Helical" evidence="1">
    <location>
        <begin position="214"/>
        <end position="234"/>
    </location>
</feature>
<feature type="transmembrane region" description="Helical" evidence="1">
    <location>
        <begin position="245"/>
        <end position="265"/>
    </location>
</feature>
<name>UPPP_BUCAI</name>
<protein>
    <recommendedName>
        <fullName evidence="1">Undecaprenyl-diphosphatase</fullName>
        <ecNumber evidence="1">3.6.1.27</ecNumber>
    </recommendedName>
    <alternativeName>
        <fullName evidence="1">Bacitracin resistance protein</fullName>
    </alternativeName>
    <alternativeName>
        <fullName evidence="1">Undecaprenyl pyrophosphate phosphatase</fullName>
    </alternativeName>
</protein>
<comment type="function">
    <text evidence="1">Catalyzes the dephosphorylation of undecaprenyl diphosphate (UPP). Confers resistance to bacitracin.</text>
</comment>
<comment type="catalytic activity">
    <reaction evidence="1">
        <text>di-trans,octa-cis-undecaprenyl diphosphate + H2O = di-trans,octa-cis-undecaprenyl phosphate + phosphate + H(+)</text>
        <dbReference type="Rhea" id="RHEA:28094"/>
        <dbReference type="ChEBI" id="CHEBI:15377"/>
        <dbReference type="ChEBI" id="CHEBI:15378"/>
        <dbReference type="ChEBI" id="CHEBI:43474"/>
        <dbReference type="ChEBI" id="CHEBI:58405"/>
        <dbReference type="ChEBI" id="CHEBI:60392"/>
        <dbReference type="EC" id="3.6.1.27"/>
    </reaction>
</comment>
<comment type="subcellular location">
    <subcellularLocation>
        <location evidence="1">Cell membrane</location>
        <topology evidence="1">Multi-pass membrane protein</topology>
    </subcellularLocation>
</comment>
<comment type="miscellaneous">
    <text>Bacitracin is thought to be involved in the inhibition of peptidoglycan synthesis by sequestering undecaprenyl diphosphate, thereby reducing the pool of lipid carrier available.</text>
</comment>
<comment type="similarity">
    <text evidence="1">Belongs to the UppP family.</text>
</comment>
<proteinExistence type="inferred from homology"/>
<reference key="1">
    <citation type="journal article" date="2000" name="Nature">
        <title>Genome sequence of the endocellular bacterial symbiont of aphids Buchnera sp. APS.</title>
        <authorList>
            <person name="Shigenobu S."/>
            <person name="Watanabe H."/>
            <person name="Hattori M."/>
            <person name="Sakaki Y."/>
            <person name="Ishikawa H."/>
        </authorList>
    </citation>
    <scope>NUCLEOTIDE SEQUENCE [LARGE SCALE GENOMIC DNA]</scope>
    <source>
        <strain>APS</strain>
    </source>
</reference>